<evidence type="ECO:0000250" key="1">
    <source>
        <dbReference type="UniProtKB" id="O75113"/>
    </source>
</evidence>
<evidence type="ECO:0000250" key="2">
    <source>
        <dbReference type="UniProtKB" id="Q6A037"/>
    </source>
</evidence>
<evidence type="ECO:0000255" key="3"/>
<evidence type="ECO:0000256" key="4">
    <source>
        <dbReference type="SAM" id="MobiDB-lite"/>
    </source>
</evidence>
<evidence type="ECO:0000303" key="5">
    <source>
    </source>
</evidence>
<evidence type="ECO:0000305" key="6"/>
<proteinExistence type="evidence at transcript level"/>
<protein>
    <recommendedName>
        <fullName evidence="2">NEDD4-binding protein 1</fullName>
        <shortName evidence="2">N4BP1</shortName>
        <ecNumber evidence="1">3.1.-.-</ecNumber>
    </recommendedName>
</protein>
<accession>Q5ZLE9</accession>
<comment type="function">
    <text evidence="1 2">Potent suppressor of cytokine production that acts as a regulator of innate immune signaling and inflammation. Acts as a key negative regulator of select cytokine and chemokine responses elicited by TRIF-independent Toll-like receptors (TLRs), thereby limiting inflammatory cytokine responses to minor insults (By similarity). Has ribonuclease activity (By similarity).</text>
</comment>
<comment type="subcellular location">
    <subcellularLocation>
        <location evidence="2">Cytoplasm</location>
        <location evidence="2">Cytosol</location>
    </subcellularLocation>
    <subcellularLocation>
        <location evidence="2">Nucleus</location>
    </subcellularLocation>
    <subcellularLocation>
        <location evidence="2">Nucleus</location>
        <location evidence="2">Nucleolus</location>
    </subcellularLocation>
    <subcellularLocation>
        <location evidence="2">Nucleus</location>
        <location evidence="2">PML body</location>
    </subcellularLocation>
    <text evidence="2">Primarily localizes to the nucleolus. Also localizes to the PML nuclear bodies, when desumoylated.</text>
</comment>
<comment type="similarity">
    <text evidence="6">Belongs to the N4BP1 family.</text>
</comment>
<sequence>MAARWAAHGPGPGLDEFTVPAEKRRFLEGSRGRIQGLFEVRLAVLEAQGDWRPALPPPGQPPPAARIWVQLAGGGKAVRSAKEYIKGLCEPELEEKEYYPKDMHCIFVGAQNMFLNSLIQDTCADITVLEIGLLSIKGGAEAVVMAQSQVQQFVKLFENNESLSSECESDIKKQFRQFVEAHADKYTMDLLILPSSLKRELLTLMQTECCESRGAIIDLTGSKSPAELLQDKTSKVILTSRDGKMGDEEERNNAGTPVTELTKQMDNVFSDAPETSFVPINVVPPLEAMTSKERQSCKRRFSDAEESLPKKQLSLENDQEVKSVSHNDSSKRDAVIDLISDSSGELDDPSYCIKEGDDISEEIEYKILVNFFRTMGYSQSIVEKVIGVLGQSVEPLTLLEEIEKENLRFQKEQEWSSKTPKTTNLRLGSNANSSHKLEDEDISCKKNPLKTTHTSNETRTERHKARDMPSTQVDAEDKMHVSVCKPVSPDKSSAICYKKTDIYCPGKNHNSTSSDAETDGFVPLSPPQAGAPKDVDFVARGSSDVRCTSAKSKTAVHQKSAGPSPVQNSHSVVEDQLGHCSSYQVRSPNQHTSQMSNFENPTQAHVLSSEIHSANPDREVSGSHRRHIDPSITGVQRFLESLKKPYRLELKNEPGKPYLKHIIIDGSNVAISHGLRKFFSCRGIAIAVDYFWKRGHRNITVFVPQWRTRRDPSITEQDFLTQLEDVGILSLTPSRMVLGARIASHDDRFLLHLADKTGGVIVTNDNFREFVTESLAWREIIQKRLLQYTFAGDIFMVPDDPLGRNGPRLDDFLQSEGCSRDFLSAQKALQSREQYSSETPLFMHVPNPASSSQQPKNRAHGDHSAAWLPLDTNMKACLSIPPQRSASETVWLREALIKIFPDYEQRQKIDKILADHPFMRDLNALSAMVLD</sequence>
<organism>
    <name type="scientific">Gallus gallus</name>
    <name type="common">Chicken</name>
    <dbReference type="NCBI Taxonomy" id="9031"/>
    <lineage>
        <taxon>Eukaryota</taxon>
        <taxon>Metazoa</taxon>
        <taxon>Chordata</taxon>
        <taxon>Craniata</taxon>
        <taxon>Vertebrata</taxon>
        <taxon>Euteleostomi</taxon>
        <taxon>Archelosauria</taxon>
        <taxon>Archosauria</taxon>
        <taxon>Dinosauria</taxon>
        <taxon>Saurischia</taxon>
        <taxon>Theropoda</taxon>
        <taxon>Coelurosauria</taxon>
        <taxon>Aves</taxon>
        <taxon>Neognathae</taxon>
        <taxon>Galloanserae</taxon>
        <taxon>Galliformes</taxon>
        <taxon>Phasianidae</taxon>
        <taxon>Phasianinae</taxon>
        <taxon>Gallus</taxon>
    </lineage>
</organism>
<name>N4BP1_CHICK</name>
<dbReference type="EC" id="3.1.-.-" evidence="1"/>
<dbReference type="EMBL" id="AJ719785">
    <property type="protein sequence ID" value="CAG31444.1"/>
    <property type="molecule type" value="mRNA"/>
</dbReference>
<dbReference type="RefSeq" id="NP_001025741.1">
    <property type="nucleotide sequence ID" value="NM_001030570.1"/>
</dbReference>
<dbReference type="SMR" id="Q5ZLE9"/>
<dbReference type="FunCoup" id="Q5ZLE9">
    <property type="interactions" value="1466"/>
</dbReference>
<dbReference type="STRING" id="9031.ENSGALP00000006197"/>
<dbReference type="PaxDb" id="9031-ENSGALP00000006197"/>
<dbReference type="GeneID" id="415739"/>
<dbReference type="KEGG" id="gga:415739"/>
<dbReference type="CTD" id="9683"/>
<dbReference type="VEuPathDB" id="HostDB:geneid_415739"/>
<dbReference type="eggNOG" id="KOG3777">
    <property type="taxonomic scope" value="Eukaryota"/>
</dbReference>
<dbReference type="InParanoid" id="Q5ZLE9"/>
<dbReference type="OrthoDB" id="392925at2759"/>
<dbReference type="PhylomeDB" id="Q5ZLE9"/>
<dbReference type="PRO" id="PR:Q5ZLE9"/>
<dbReference type="Proteomes" id="UP000000539">
    <property type="component" value="Unassembled WGS sequence"/>
</dbReference>
<dbReference type="GO" id="GO:0005829">
    <property type="term" value="C:cytosol"/>
    <property type="evidence" value="ECO:0000250"/>
    <property type="project" value="UniProtKB"/>
</dbReference>
<dbReference type="GO" id="GO:0005730">
    <property type="term" value="C:nucleolus"/>
    <property type="evidence" value="ECO:0000250"/>
    <property type="project" value="UniProtKB"/>
</dbReference>
<dbReference type="GO" id="GO:0005634">
    <property type="term" value="C:nucleus"/>
    <property type="evidence" value="ECO:0000318"/>
    <property type="project" value="GO_Central"/>
</dbReference>
<dbReference type="GO" id="GO:0016605">
    <property type="term" value="C:PML body"/>
    <property type="evidence" value="ECO:0000250"/>
    <property type="project" value="UniProtKB"/>
</dbReference>
<dbReference type="GO" id="GO:0003729">
    <property type="term" value="F:mRNA binding"/>
    <property type="evidence" value="ECO:0000250"/>
    <property type="project" value="UniProtKB"/>
</dbReference>
<dbReference type="GO" id="GO:0004540">
    <property type="term" value="F:RNA nuclease activity"/>
    <property type="evidence" value="ECO:0000250"/>
    <property type="project" value="UniProtKB"/>
</dbReference>
<dbReference type="GO" id="GO:0043130">
    <property type="term" value="F:ubiquitin binding"/>
    <property type="evidence" value="ECO:0000250"/>
    <property type="project" value="UniProtKB"/>
</dbReference>
<dbReference type="GO" id="GO:0045087">
    <property type="term" value="P:innate immune response"/>
    <property type="evidence" value="ECO:0007669"/>
    <property type="project" value="UniProtKB-KW"/>
</dbReference>
<dbReference type="GO" id="GO:0001818">
    <property type="term" value="P:negative regulation of cytokine production"/>
    <property type="evidence" value="ECO:0000250"/>
    <property type="project" value="UniProtKB"/>
</dbReference>
<dbReference type="GO" id="GO:0032435">
    <property type="term" value="P:negative regulation of proteasomal ubiquitin-dependent protein catabolic process"/>
    <property type="evidence" value="ECO:0000250"/>
    <property type="project" value="UniProtKB"/>
</dbReference>
<dbReference type="GO" id="GO:0031397">
    <property type="term" value="P:negative regulation of protein ubiquitination"/>
    <property type="evidence" value="ECO:0000250"/>
    <property type="project" value="UniProtKB"/>
</dbReference>
<dbReference type="GO" id="GO:0045071">
    <property type="term" value="P:negative regulation of viral genome replication"/>
    <property type="evidence" value="ECO:0000250"/>
    <property type="project" value="UniProtKB"/>
</dbReference>
<dbReference type="GO" id="GO:0045088">
    <property type="term" value="P:regulation of innate immune response"/>
    <property type="evidence" value="ECO:0000250"/>
    <property type="project" value="UniProtKB"/>
</dbReference>
<dbReference type="CDD" id="cd22476">
    <property type="entry name" value="KH-I_N4BP1"/>
    <property type="match status" value="1"/>
</dbReference>
<dbReference type="CDD" id="cd09032">
    <property type="entry name" value="KH-I_N4BP1_like_rpt1"/>
    <property type="match status" value="1"/>
</dbReference>
<dbReference type="CDD" id="cd18728">
    <property type="entry name" value="PIN_N4BP1-like"/>
    <property type="match status" value="1"/>
</dbReference>
<dbReference type="FunFam" id="3.40.50.11980:FF:000001">
    <property type="entry name" value="ZC3H12A isoform 1"/>
    <property type="match status" value="1"/>
</dbReference>
<dbReference type="Gene3D" id="3.40.50.11980">
    <property type="match status" value="1"/>
</dbReference>
<dbReference type="InterPro" id="IPR056629">
    <property type="entry name" value="KH_N4BP1_1st"/>
</dbReference>
<dbReference type="InterPro" id="IPR056630">
    <property type="entry name" value="KH_N4BP1_2nd"/>
</dbReference>
<dbReference type="InterPro" id="IPR021869">
    <property type="entry name" value="RNase_Zc3h12_NYN"/>
</dbReference>
<dbReference type="InterPro" id="IPR056578">
    <property type="entry name" value="UBA_N4BP1_C"/>
</dbReference>
<dbReference type="InterPro" id="IPR051101">
    <property type="entry name" value="ZC3H12/N4BP1_RNase_Reg"/>
</dbReference>
<dbReference type="PANTHER" id="PTHR12876">
    <property type="entry name" value="N4BP1-RELATED"/>
    <property type="match status" value="1"/>
</dbReference>
<dbReference type="PANTHER" id="PTHR12876:SF26">
    <property type="entry name" value="NEDD4-BINDING PROTEIN 1"/>
    <property type="match status" value="1"/>
</dbReference>
<dbReference type="Pfam" id="PF23050">
    <property type="entry name" value="KH_N4BP1_1st"/>
    <property type="match status" value="1"/>
</dbReference>
<dbReference type="Pfam" id="PF23052">
    <property type="entry name" value="KH_N4BP1_2nd"/>
    <property type="match status" value="1"/>
</dbReference>
<dbReference type="Pfam" id="PF11977">
    <property type="entry name" value="RNase_Zc3h12a"/>
    <property type="match status" value="1"/>
</dbReference>
<dbReference type="Pfam" id="PF23054">
    <property type="entry name" value="UBA_N4BP1_C"/>
    <property type="match status" value="1"/>
</dbReference>
<keyword id="KW-0963">Cytoplasm</keyword>
<keyword id="KW-0378">Hydrolase</keyword>
<keyword id="KW-0391">Immunity</keyword>
<keyword id="KW-0399">Innate immunity</keyword>
<keyword id="KW-0540">Nuclease</keyword>
<keyword id="KW-0539">Nucleus</keyword>
<keyword id="KW-1185">Reference proteome</keyword>
<keyword id="KW-0694">RNA-binding</keyword>
<reference key="1">
    <citation type="journal article" date="2005" name="Genome Biol.">
        <title>Full-length cDNAs from chicken bursal lymphocytes to facilitate gene function analysis.</title>
        <authorList>
            <person name="Caldwell R.B."/>
            <person name="Kierzek A.M."/>
            <person name="Arakawa H."/>
            <person name="Bezzubov Y."/>
            <person name="Zaim J."/>
            <person name="Fiedler P."/>
            <person name="Kutter S."/>
            <person name="Blagodatski A."/>
            <person name="Kostovska D."/>
            <person name="Koter M."/>
            <person name="Plachy J."/>
            <person name="Carninci P."/>
            <person name="Hayashizaki Y."/>
            <person name="Buerstedde J.-M."/>
        </authorList>
    </citation>
    <scope>NUCLEOTIDE SEQUENCE [LARGE SCALE MRNA]</scope>
    <source>
        <strain>CB</strain>
        <tissue>Bursa of Fabricius</tissue>
    </source>
</reference>
<feature type="chain" id="PRO_0000301986" description="NEDD4-binding protein 1">
    <location>
        <begin position="1"/>
        <end position="931"/>
    </location>
</feature>
<feature type="domain" description="KH-like" evidence="3">
    <location>
        <begin position="75"/>
        <end position="159"/>
    </location>
</feature>
<feature type="domain" description="RNase NYN" evidence="3">
    <location>
        <begin position="659"/>
        <end position="811"/>
    </location>
</feature>
<feature type="region of interest" description="Disordered" evidence="4">
    <location>
        <begin position="289"/>
        <end position="329"/>
    </location>
</feature>
<feature type="region of interest" description="Disordered" evidence="4">
    <location>
        <begin position="413"/>
        <end position="474"/>
    </location>
</feature>
<feature type="region of interest" description="Disordered" evidence="4">
    <location>
        <begin position="547"/>
        <end position="571"/>
    </location>
</feature>
<feature type="region of interest" description="Disordered" evidence="4">
    <location>
        <begin position="841"/>
        <end position="863"/>
    </location>
</feature>
<feature type="region of interest" description="CoCUN" evidence="1">
    <location>
        <begin position="884"/>
        <end position="931"/>
    </location>
</feature>
<feature type="compositionally biased region" description="Basic and acidic residues" evidence="4">
    <location>
        <begin position="290"/>
        <end position="309"/>
    </location>
</feature>
<feature type="compositionally biased region" description="Basic and acidic residues" evidence="4">
    <location>
        <begin position="319"/>
        <end position="329"/>
    </location>
</feature>
<feature type="compositionally biased region" description="Polar residues" evidence="4">
    <location>
        <begin position="416"/>
        <end position="434"/>
    </location>
</feature>
<feature type="compositionally biased region" description="Basic and acidic residues" evidence="4">
    <location>
        <begin position="435"/>
        <end position="444"/>
    </location>
</feature>
<feature type="compositionally biased region" description="Basic and acidic residues" evidence="4">
    <location>
        <begin position="456"/>
        <end position="467"/>
    </location>
</feature>
<feature type="compositionally biased region" description="Polar residues" evidence="4">
    <location>
        <begin position="547"/>
        <end position="557"/>
    </location>
</feature>
<gene>
    <name evidence="2" type="primary">N4BP1</name>
    <name evidence="5" type="ORF">RCJMB04_6i4</name>
</gene>